<protein>
    <recommendedName>
        <fullName>Benzene 1,2-dioxygenase subunit beta</fullName>
        <ecNumber>1.14.12.3</ecNumber>
    </recommendedName>
    <alternativeName>
        <fullName>Benzene 1,2-dioxygenase P2 subunit</fullName>
    </alternativeName>
    <alternativeName>
        <fullName>Toluene 2,3-dioxygenase subunit beta</fullName>
        <ecNumber>1.14.12.11</ecNumber>
    </alternativeName>
</protein>
<proteinExistence type="inferred from homology"/>
<name>BNZB_PSEPU</name>
<evidence type="ECO:0000250" key="1"/>
<evidence type="ECO:0000305" key="2"/>
<sequence length="187" mass="22013">MIDSANRADVFLRKPAPVAPELQHEVEQFYYWEAKLLNDRRFEEWFALLAEDIHYFMPIRTTRIMRDSRLEYSGSREYAHFDDDATMMKGRLRKITSDVSWSENPASRTRHLVSNVMIVGAEAEGEYEISSAFIVYRNRLERQLDIFAGERRDTLRRNTSEAGFEIVNRTILIDQSTILANNLSFFF</sequence>
<dbReference type="EC" id="1.14.12.3"/>
<dbReference type="EC" id="1.14.12.11"/>
<dbReference type="EMBL" id="M17904">
    <property type="protein sequence ID" value="AAA25736.1"/>
    <property type="molecule type" value="Genomic_DNA"/>
</dbReference>
<dbReference type="PIR" id="B29830">
    <property type="entry name" value="B29830"/>
</dbReference>
<dbReference type="RefSeq" id="WP_012052600.1">
    <property type="nucleotide sequence ID" value="NZ_NHBC01000013.1"/>
</dbReference>
<dbReference type="SMR" id="P0C619"/>
<dbReference type="UniPathway" id="UPA00228"/>
<dbReference type="UniPathway" id="UPA00272">
    <property type="reaction ID" value="UER00391"/>
</dbReference>
<dbReference type="UniPathway" id="UPA00273"/>
<dbReference type="GO" id="GO:0018619">
    <property type="term" value="F:benzene 1,2-dioxygenase activity"/>
    <property type="evidence" value="ECO:0007669"/>
    <property type="project" value="UniProtKB-EC"/>
</dbReference>
<dbReference type="GO" id="GO:0018624">
    <property type="term" value="F:toluene dioxygenase activity"/>
    <property type="evidence" value="ECO:0007669"/>
    <property type="project" value="UniProtKB-EC"/>
</dbReference>
<dbReference type="GO" id="GO:0019380">
    <property type="term" value="P:3-phenylpropionate catabolic process"/>
    <property type="evidence" value="ECO:0007669"/>
    <property type="project" value="TreeGrafter"/>
</dbReference>
<dbReference type="GO" id="GO:0042203">
    <property type="term" value="P:toluene catabolic process"/>
    <property type="evidence" value="ECO:0007669"/>
    <property type="project" value="UniProtKB-UniPathway"/>
</dbReference>
<dbReference type="GO" id="GO:0042184">
    <property type="term" value="P:xylene catabolic process"/>
    <property type="evidence" value="ECO:0007669"/>
    <property type="project" value="UniProtKB-UniPathway"/>
</dbReference>
<dbReference type="CDD" id="cd00667">
    <property type="entry name" value="ring_hydroxylating_dioxygenases_beta"/>
    <property type="match status" value="1"/>
</dbReference>
<dbReference type="Gene3D" id="3.10.450.50">
    <property type="match status" value="1"/>
</dbReference>
<dbReference type="InterPro" id="IPR032710">
    <property type="entry name" value="NTF2-like_dom_sf"/>
</dbReference>
<dbReference type="InterPro" id="IPR000391">
    <property type="entry name" value="Rng_hydr_dOase-bsu"/>
</dbReference>
<dbReference type="NCBIfam" id="NF007479">
    <property type="entry name" value="PRK10069.1"/>
    <property type="match status" value="1"/>
</dbReference>
<dbReference type="PANTHER" id="PTHR41534:SF2">
    <property type="entry name" value="3-PHENYLPROPIONATE_CINNAMIC ACID DIOXYGENASE SUBUNIT BETA"/>
    <property type="match status" value="1"/>
</dbReference>
<dbReference type="PANTHER" id="PTHR41534">
    <property type="entry name" value="BLR3401 PROTEIN"/>
    <property type="match status" value="1"/>
</dbReference>
<dbReference type="Pfam" id="PF00866">
    <property type="entry name" value="Ring_hydroxyl_B"/>
    <property type="match status" value="1"/>
</dbReference>
<dbReference type="SUPFAM" id="SSF54427">
    <property type="entry name" value="NTF2-like"/>
    <property type="match status" value="1"/>
</dbReference>
<comment type="function">
    <text>Catalyzes both the oxidation of benzene and toluene. The beta subunit may be responsible for the substrate specificity of the enzyme.</text>
</comment>
<comment type="catalytic activity">
    <reaction>
        <text>benzene + NADH + O2 + H(+) = cis-1,2-dihydrobenzene-1,2-diol + NAD(+)</text>
        <dbReference type="Rhea" id="RHEA:13813"/>
        <dbReference type="ChEBI" id="CHEBI:15378"/>
        <dbReference type="ChEBI" id="CHEBI:15379"/>
        <dbReference type="ChEBI" id="CHEBI:16190"/>
        <dbReference type="ChEBI" id="CHEBI:16716"/>
        <dbReference type="ChEBI" id="CHEBI:57540"/>
        <dbReference type="ChEBI" id="CHEBI:57945"/>
        <dbReference type="EC" id="1.14.12.3"/>
    </reaction>
</comment>
<comment type="catalytic activity">
    <reaction>
        <text>toluene + NADH + O2 + H(+) = (1S,2R)-3-methylcyclohexa-3,5-diene-1,2-diol + NAD(+)</text>
        <dbReference type="Rhea" id="RHEA:16737"/>
        <dbReference type="ChEBI" id="CHEBI:15378"/>
        <dbReference type="ChEBI" id="CHEBI:15379"/>
        <dbReference type="ChEBI" id="CHEBI:15565"/>
        <dbReference type="ChEBI" id="CHEBI:17578"/>
        <dbReference type="ChEBI" id="CHEBI:57540"/>
        <dbReference type="ChEBI" id="CHEBI:57945"/>
        <dbReference type="EC" id="1.14.12.11"/>
    </reaction>
</comment>
<comment type="cofactor">
    <cofactor evidence="1">
        <name>[2Fe-2S] cluster</name>
        <dbReference type="ChEBI" id="CHEBI:190135"/>
    </cofactor>
    <text evidence="1">Binds 1 [2Fe-2S] cluster per subunit.</text>
</comment>
<comment type="cofactor">
    <cofactor evidence="1">
        <name>Fe cation</name>
        <dbReference type="ChEBI" id="CHEBI:24875"/>
    </cofactor>
    <text evidence="1">Binds 1 Fe cation per subunit.</text>
</comment>
<comment type="pathway">
    <text>Aromatic compound metabolism; benzene degradation; catechol from benzene: step 1/2.</text>
</comment>
<comment type="pathway">
    <text>Xenobiotic degradation; toluene degradation.</text>
</comment>
<comment type="pathway">
    <text>Xenobiotic degradation; xylene degradation.</text>
</comment>
<comment type="subunit">
    <text>This dioxygenase system consists of four proteins: the two subunits of the hydroxylase component (BnzA and BnzB), a ferredoxin (BnzC) and a ferredoxin reductase (BnzD).</text>
</comment>
<comment type="similarity">
    <text evidence="2">Belongs to the bacterial ring-hydroxylating dioxygenase beta subunit family.</text>
</comment>
<feature type="chain" id="PRO_0000085067" description="Benzene 1,2-dioxygenase subunit beta">
    <location>
        <begin position="1"/>
        <end position="187"/>
    </location>
</feature>
<reference key="1">
    <citation type="journal article" date="1987" name="J. Bacteriol.">
        <title>Nucleotide sequencing and characterization of the genes encoding benzene oxidation enzymes of Pseudomonas putida.</title>
        <authorList>
            <person name="Irie S."/>
            <person name="Doi S."/>
            <person name="Yorifuji T."/>
            <person name="Takagi M."/>
            <person name="Yano K."/>
        </authorList>
    </citation>
    <scope>NUCLEOTIDE SEQUENCE [GENOMIC DNA]</scope>
    <source>
        <strain>BE-81</strain>
    </source>
</reference>
<organism>
    <name type="scientific">Pseudomonas putida</name>
    <name type="common">Arthrobacter siderocapsulatus</name>
    <dbReference type="NCBI Taxonomy" id="303"/>
    <lineage>
        <taxon>Bacteria</taxon>
        <taxon>Pseudomonadati</taxon>
        <taxon>Pseudomonadota</taxon>
        <taxon>Gammaproteobacteria</taxon>
        <taxon>Pseudomonadales</taxon>
        <taxon>Pseudomonadaceae</taxon>
        <taxon>Pseudomonas</taxon>
    </lineage>
</organism>
<keyword id="KW-0058">Aromatic hydrocarbons catabolism</keyword>
<keyword id="KW-0223">Dioxygenase</keyword>
<keyword id="KW-0520">NAD</keyword>
<keyword id="KW-0560">Oxidoreductase</keyword>
<gene>
    <name type="primary">bnzB</name>
    <name type="synonym">todC2</name>
</gene>
<accession>P0C619</accession>
<accession>P08085</accession>
<accession>P13451</accession>